<protein>
    <recommendedName>
        <fullName evidence="10">Twinkle mtDNA helicase</fullName>
        <ecNumber evidence="2">5.6.2.3</ecNumber>
    </recommendedName>
    <alternativeName>
        <fullName>Progressive external ophthalmoplegia 1 protein homolog</fullName>
    </alternativeName>
    <alternativeName>
        <fullName>T7 gp4-like protein with intramitochondrial nucleoid localization</fullName>
    </alternativeName>
    <alternativeName>
        <fullName>T7-like mitochondrial DNA helicase</fullName>
    </alternativeName>
    <alternativeName>
        <fullName evidence="9">Twinkle protein, mitochondrial</fullName>
    </alternativeName>
</protein>
<organism>
    <name type="scientific">Mus musculus</name>
    <name type="common">Mouse</name>
    <dbReference type="NCBI Taxonomy" id="10090"/>
    <lineage>
        <taxon>Eukaryota</taxon>
        <taxon>Metazoa</taxon>
        <taxon>Chordata</taxon>
        <taxon>Craniata</taxon>
        <taxon>Vertebrata</taxon>
        <taxon>Euteleostomi</taxon>
        <taxon>Mammalia</taxon>
        <taxon>Eutheria</taxon>
        <taxon>Euarchontoglires</taxon>
        <taxon>Glires</taxon>
        <taxon>Rodentia</taxon>
        <taxon>Myomorpha</taxon>
        <taxon>Muroidea</taxon>
        <taxon>Muridae</taxon>
        <taxon>Murinae</taxon>
        <taxon>Mus</taxon>
        <taxon>Mus</taxon>
    </lineage>
</organism>
<proteinExistence type="evidence at transcript level"/>
<evidence type="ECO:0000250" key="1"/>
<evidence type="ECO:0000250" key="2">
    <source>
        <dbReference type="UniProtKB" id="Q96RR1"/>
    </source>
</evidence>
<evidence type="ECO:0000250" key="3">
    <source>
        <dbReference type="UniProtKB" id="Q9VL76"/>
    </source>
</evidence>
<evidence type="ECO:0000255" key="4"/>
<evidence type="ECO:0000255" key="5">
    <source>
        <dbReference type="PROSITE-ProRule" id="PRU00596"/>
    </source>
</evidence>
<evidence type="ECO:0000256" key="6">
    <source>
        <dbReference type="SAM" id="MobiDB-lite"/>
    </source>
</evidence>
<evidence type="ECO:0000269" key="7">
    <source>
    </source>
</evidence>
<evidence type="ECO:0000303" key="8">
    <source>
    </source>
</evidence>
<evidence type="ECO:0000305" key="9"/>
<evidence type="ECO:0000312" key="10">
    <source>
        <dbReference type="MGI" id="MGI:2137410"/>
    </source>
</evidence>
<reference key="1">
    <citation type="submission" date="2001-10" db="EMBL/GenBank/DDBJ databases">
        <title>Cloning of full length Mus musculus Twinkle cDNA.</title>
        <authorList>
            <person name="Spelbrink J.N."/>
        </authorList>
    </citation>
    <scope>NUCLEOTIDE SEQUENCE [MRNA] (ISOFORM 1)</scope>
    <source>
        <tissue>Fibroblast</tissue>
    </source>
</reference>
<reference key="2">
    <citation type="journal article" date="2005" name="Science">
        <title>The transcriptional landscape of the mammalian genome.</title>
        <authorList>
            <person name="Carninci P."/>
            <person name="Kasukawa T."/>
            <person name="Katayama S."/>
            <person name="Gough J."/>
            <person name="Frith M.C."/>
            <person name="Maeda N."/>
            <person name="Oyama R."/>
            <person name="Ravasi T."/>
            <person name="Lenhard B."/>
            <person name="Wells C."/>
            <person name="Kodzius R."/>
            <person name="Shimokawa K."/>
            <person name="Bajic V.B."/>
            <person name="Brenner S.E."/>
            <person name="Batalov S."/>
            <person name="Forrest A.R."/>
            <person name="Zavolan M."/>
            <person name="Davis M.J."/>
            <person name="Wilming L.G."/>
            <person name="Aidinis V."/>
            <person name="Allen J.E."/>
            <person name="Ambesi-Impiombato A."/>
            <person name="Apweiler R."/>
            <person name="Aturaliya R.N."/>
            <person name="Bailey T.L."/>
            <person name="Bansal M."/>
            <person name="Baxter L."/>
            <person name="Beisel K.W."/>
            <person name="Bersano T."/>
            <person name="Bono H."/>
            <person name="Chalk A.M."/>
            <person name="Chiu K.P."/>
            <person name="Choudhary V."/>
            <person name="Christoffels A."/>
            <person name="Clutterbuck D.R."/>
            <person name="Crowe M.L."/>
            <person name="Dalla E."/>
            <person name="Dalrymple B.P."/>
            <person name="de Bono B."/>
            <person name="Della Gatta G."/>
            <person name="di Bernardo D."/>
            <person name="Down T."/>
            <person name="Engstrom P."/>
            <person name="Fagiolini M."/>
            <person name="Faulkner G."/>
            <person name="Fletcher C.F."/>
            <person name="Fukushima T."/>
            <person name="Furuno M."/>
            <person name="Futaki S."/>
            <person name="Gariboldi M."/>
            <person name="Georgii-Hemming P."/>
            <person name="Gingeras T.R."/>
            <person name="Gojobori T."/>
            <person name="Green R.E."/>
            <person name="Gustincich S."/>
            <person name="Harbers M."/>
            <person name="Hayashi Y."/>
            <person name="Hensch T.K."/>
            <person name="Hirokawa N."/>
            <person name="Hill D."/>
            <person name="Huminiecki L."/>
            <person name="Iacono M."/>
            <person name="Ikeo K."/>
            <person name="Iwama A."/>
            <person name="Ishikawa T."/>
            <person name="Jakt M."/>
            <person name="Kanapin A."/>
            <person name="Katoh M."/>
            <person name="Kawasawa Y."/>
            <person name="Kelso J."/>
            <person name="Kitamura H."/>
            <person name="Kitano H."/>
            <person name="Kollias G."/>
            <person name="Krishnan S.P."/>
            <person name="Kruger A."/>
            <person name="Kummerfeld S.K."/>
            <person name="Kurochkin I.V."/>
            <person name="Lareau L.F."/>
            <person name="Lazarevic D."/>
            <person name="Lipovich L."/>
            <person name="Liu J."/>
            <person name="Liuni S."/>
            <person name="McWilliam S."/>
            <person name="Madan Babu M."/>
            <person name="Madera M."/>
            <person name="Marchionni L."/>
            <person name="Matsuda H."/>
            <person name="Matsuzawa S."/>
            <person name="Miki H."/>
            <person name="Mignone F."/>
            <person name="Miyake S."/>
            <person name="Morris K."/>
            <person name="Mottagui-Tabar S."/>
            <person name="Mulder N."/>
            <person name="Nakano N."/>
            <person name="Nakauchi H."/>
            <person name="Ng P."/>
            <person name="Nilsson R."/>
            <person name="Nishiguchi S."/>
            <person name="Nishikawa S."/>
            <person name="Nori F."/>
            <person name="Ohara O."/>
            <person name="Okazaki Y."/>
            <person name="Orlando V."/>
            <person name="Pang K.C."/>
            <person name="Pavan W.J."/>
            <person name="Pavesi G."/>
            <person name="Pesole G."/>
            <person name="Petrovsky N."/>
            <person name="Piazza S."/>
            <person name="Reed J."/>
            <person name="Reid J.F."/>
            <person name="Ring B.Z."/>
            <person name="Ringwald M."/>
            <person name="Rost B."/>
            <person name="Ruan Y."/>
            <person name="Salzberg S.L."/>
            <person name="Sandelin A."/>
            <person name="Schneider C."/>
            <person name="Schoenbach C."/>
            <person name="Sekiguchi K."/>
            <person name="Semple C.A."/>
            <person name="Seno S."/>
            <person name="Sessa L."/>
            <person name="Sheng Y."/>
            <person name="Shibata Y."/>
            <person name="Shimada H."/>
            <person name="Shimada K."/>
            <person name="Silva D."/>
            <person name="Sinclair B."/>
            <person name="Sperling S."/>
            <person name="Stupka E."/>
            <person name="Sugiura K."/>
            <person name="Sultana R."/>
            <person name="Takenaka Y."/>
            <person name="Taki K."/>
            <person name="Tammoja K."/>
            <person name="Tan S.L."/>
            <person name="Tang S."/>
            <person name="Taylor M.S."/>
            <person name="Tegner J."/>
            <person name="Teichmann S.A."/>
            <person name="Ueda H.R."/>
            <person name="van Nimwegen E."/>
            <person name="Verardo R."/>
            <person name="Wei C.L."/>
            <person name="Yagi K."/>
            <person name="Yamanishi H."/>
            <person name="Zabarovsky E."/>
            <person name="Zhu S."/>
            <person name="Zimmer A."/>
            <person name="Hide W."/>
            <person name="Bult C."/>
            <person name="Grimmond S.M."/>
            <person name="Teasdale R.D."/>
            <person name="Liu E.T."/>
            <person name="Brusic V."/>
            <person name="Quackenbush J."/>
            <person name="Wahlestedt C."/>
            <person name="Mattick J.S."/>
            <person name="Hume D.A."/>
            <person name="Kai C."/>
            <person name="Sasaki D."/>
            <person name="Tomaru Y."/>
            <person name="Fukuda S."/>
            <person name="Kanamori-Katayama M."/>
            <person name="Suzuki M."/>
            <person name="Aoki J."/>
            <person name="Arakawa T."/>
            <person name="Iida J."/>
            <person name="Imamura K."/>
            <person name="Itoh M."/>
            <person name="Kato T."/>
            <person name="Kawaji H."/>
            <person name="Kawagashira N."/>
            <person name="Kawashima T."/>
            <person name="Kojima M."/>
            <person name="Kondo S."/>
            <person name="Konno H."/>
            <person name="Nakano K."/>
            <person name="Ninomiya N."/>
            <person name="Nishio T."/>
            <person name="Okada M."/>
            <person name="Plessy C."/>
            <person name="Shibata K."/>
            <person name="Shiraki T."/>
            <person name="Suzuki S."/>
            <person name="Tagami M."/>
            <person name="Waki K."/>
            <person name="Watahiki A."/>
            <person name="Okamura-Oho Y."/>
            <person name="Suzuki H."/>
            <person name="Kawai J."/>
            <person name="Hayashizaki Y."/>
        </authorList>
    </citation>
    <scope>NUCLEOTIDE SEQUENCE [LARGE SCALE MRNA] (ISOFORM 1)</scope>
    <source>
        <strain>BALB/cJ</strain>
    </source>
</reference>
<reference key="3">
    <citation type="journal article" date="2004" name="Genome Res.">
        <title>The status, quality, and expansion of the NIH full-length cDNA project: the Mammalian Gene Collection (MGC).</title>
        <authorList>
            <consortium name="The MGC Project Team"/>
        </authorList>
    </citation>
    <scope>NUCLEOTIDE SEQUENCE [LARGE SCALE MRNA] (ISOFORMS 1 AND 2)</scope>
    <source>
        <strain>FVB/N</strain>
        <tissue>Liver</tissue>
    </source>
</reference>
<reference key="4">
    <citation type="journal article" date="2004" name="Hum. Mol. Genet.">
        <title>Twinkle helicase is essential for mtDNA maintenance and regulates mtDNA copy number.</title>
        <authorList>
            <person name="Tyynismaa H."/>
            <person name="Sembongi H."/>
            <person name="Bokori-Brown M."/>
            <person name="Granycome C."/>
            <person name="Ashley N."/>
            <person name="Poulton J."/>
            <person name="Jalanko A."/>
            <person name="Spelbrink J.N."/>
            <person name="Holt I.J."/>
            <person name="Suomalainen A."/>
        </authorList>
    </citation>
    <scope>TISSUE SPECIFICITY</scope>
    <scope>COREGULATION WITH MRPL43</scope>
    <scope>FUNCTION</scope>
</reference>
<feature type="transit peptide" description="Mitochondrion" evidence="1">
    <location>
        <begin position="1"/>
        <end position="31"/>
    </location>
</feature>
<feature type="chain" id="PRO_0000042641" description="Twinkle mtDNA helicase">
    <location>
        <begin position="32"/>
        <end position="685"/>
    </location>
</feature>
<feature type="domain" description="SF4 helicase" evidence="5">
    <location>
        <begin position="385"/>
        <end position="636"/>
    </location>
</feature>
<feature type="region of interest" description="Contributes to single strand DNA binding activity" evidence="2">
    <location>
        <begin position="1"/>
        <end position="122"/>
    </location>
</feature>
<feature type="region of interest" description="N-terminal region (NTR)" evidence="2">
    <location>
        <begin position="54"/>
        <end position="214"/>
    </location>
</feature>
<feature type="region of interest" description="Required for hexamers formation and DNA helicase activity" evidence="2">
    <location>
        <begin position="122"/>
        <end position="373"/>
    </location>
</feature>
<feature type="region of interest" description="Primase-like domain" evidence="2">
    <location>
        <begin position="215"/>
        <end position="335"/>
    </location>
</feature>
<feature type="region of interest" description="Maybe required for stable oligomeric structure" evidence="2">
    <location>
        <begin position="406"/>
        <end position="591"/>
    </location>
</feature>
<feature type="region of interest" description="Might negatively regulate ATPase activity" evidence="2">
    <location>
        <begin position="641"/>
        <end position="685"/>
    </location>
</feature>
<feature type="region of interest" description="Disordered" evidence="6">
    <location>
        <begin position="642"/>
        <end position="685"/>
    </location>
</feature>
<feature type="coiled-coil region" evidence="4">
    <location>
        <begin position="454"/>
        <end position="482"/>
    </location>
</feature>
<feature type="binding site" evidence="5">
    <location>
        <begin position="416"/>
        <end position="423"/>
    </location>
    <ligand>
        <name>ATP</name>
        <dbReference type="ChEBI" id="CHEBI:30616"/>
    </ligand>
</feature>
<feature type="splice variant" id="VSP_015962" description="In isoform 2." evidence="8">
    <location>
        <begin position="1"/>
        <end position="398"/>
    </location>
</feature>
<feature type="splice variant" id="VSP_015963" description="In isoform 2." evidence="8">
    <original>LNRLLKGHRKGELTVFT</original>
    <variation>MCCQTLLLTQSFVRPPI</variation>
    <location>
        <begin position="399"/>
        <end position="415"/>
    </location>
</feature>
<name>PEO1_MOUSE</name>
<gene>
    <name evidence="10" type="primary">Twnk</name>
    <name type="synonym">Peo1</name>
</gene>
<keyword id="KW-0025">Alternative splicing</keyword>
<keyword id="KW-0067">ATP-binding</keyword>
<keyword id="KW-0175">Coiled coil</keyword>
<keyword id="KW-0235">DNA replication</keyword>
<keyword id="KW-0347">Helicase</keyword>
<keyword id="KW-0378">Hydrolase</keyword>
<keyword id="KW-0413">Isomerase</keyword>
<keyword id="KW-0446">Lipid-binding</keyword>
<keyword id="KW-0472">Membrane</keyword>
<keyword id="KW-0496">Mitochondrion</keyword>
<keyword id="KW-0999">Mitochondrion inner membrane</keyword>
<keyword id="KW-1135">Mitochondrion nucleoid</keyword>
<keyword id="KW-0547">Nucleotide-binding</keyword>
<keyword id="KW-1185">Reference proteome</keyword>
<keyword id="KW-0809">Transit peptide</keyword>
<accession>Q8CIW5</accession>
<accession>Q8K1Z1</accession>
<comment type="function">
    <text evidence="2">Mitochondrial helicase involved in mtDNA replication and repair (By similarity). Might have a role in mtDNA repair (By similarity). Has DNA strand separation activity needed to form a processive replication fork for leading strand synthesis which is catalyzed by the formation of a replisome complex with POLG and mtSDB (By similarity). Preferentially unwinds DNA substrates with pre-existing 5'-and 3'- single-stranded tails but is also active on a 5'- flap substrate (By similarity). Can dissociate the invading strand of immobile or mobile D-loop DNA structures irrespective of the single strand polarity of the third strand (By similarity). In addition to its DNA strand separation activity, also has DNA strand annealing, DNA strand-exchange and DNA branch migration activities (By similarity).</text>
</comment>
<comment type="catalytic activity">
    <reaction evidence="2">
        <text>ATP + H2O = ADP + phosphate + H(+)</text>
        <dbReference type="Rhea" id="RHEA:13065"/>
        <dbReference type="ChEBI" id="CHEBI:15377"/>
        <dbReference type="ChEBI" id="CHEBI:15378"/>
        <dbReference type="ChEBI" id="CHEBI:30616"/>
        <dbReference type="ChEBI" id="CHEBI:43474"/>
        <dbReference type="ChEBI" id="CHEBI:456216"/>
        <dbReference type="EC" id="5.6.2.3"/>
    </reaction>
</comment>
<comment type="catalytic activity">
    <reaction evidence="2">
        <text>Couples ATP hydrolysis with the unwinding of duplex DNA at the replication fork by translocating in the 5'-3' direction. This creates two antiparallel DNA single strands (ssDNA). The leading ssDNA polymer is the template for DNA polymerase III holoenzyme which synthesizes a continuous strand.</text>
        <dbReference type="EC" id="5.6.2.3"/>
    </reaction>
</comment>
<comment type="subunit">
    <text evidence="2">Homohexamer (via C-terminus), which assembles in a ring-like structure (By similarity). Homoheptamer, which assembles in a ring-like structure (By similarity). Homooctamer, which assembles in a ring-like structure (By similarity). Oligomers may sequentially eject two monomers (octamer&gt;heptamer&gt;hexamer) upon DNA binding (By similarity). Oligomerization is Mg(2+), nucleotide and DNA-independent, however, Mg(2+) and nucleotide stabilize the homohexameric form (By similarity). Interacts with POLG in vitro. Interacts with LONP1.</text>
</comment>
<comment type="subcellular location">
    <subcellularLocation>
        <location evidence="2">Mitochondrion matrix</location>
        <location evidence="2">Mitochondrion nucleoid</location>
    </subcellularLocation>
    <subcellularLocation>
        <location evidence="2">Mitochondrion inner membrane</location>
        <topology evidence="2">Peripheral membrane protein</topology>
    </subcellularLocation>
    <text evidence="2 3">Colocalizes with mtDNA in mitochondrial nucleoids, a nucleoproteins complex consisting of a number of copies of proteins associated with mtDNA, probably involved in mtDNA maintenance and expression (By similarity). Associates with phospholipid membranes via electrostatic binding (By similarity). Preferentially associates with membranes enriched with cardiolipin, a lipid abundant in the mitochondrial inner membrane (By similarity). ATPase and helicase activity is enhanced by binding to lipid membranes (By similarity).</text>
</comment>
<comment type="alternative products">
    <event type="alternative splicing"/>
    <isoform>
        <id>Q8CIW5-1</id>
        <name>1</name>
        <sequence type="displayed"/>
    </isoform>
    <isoform>
        <id>Q8CIW5-2</id>
        <name>2</name>
        <sequence type="described" ref="VSP_015962 VSP_015963"/>
    </isoform>
</comment>
<comment type="tissue specificity">
    <text evidence="7">Ubiquitous with the highest levels in the liver, heart and kidneys. The skeletal muscle, brain and testis showed lower but detectable expression. Expression is coregulated with MRPL43.</text>
</comment>
<comment type="domain">
    <text evidence="2">N-terminus enhances protein stability and hexamer formation, which is important for DNA binding, and is required for DNA helicase activity and, ultimately, for mtDNA replisome processivity.</text>
</comment>
<comment type="caution">
    <text evidence="2">The N-terminus contains a putative primase-like domain; however the absence of the zinc binding domain and other motifs important for catalysis suggests that TWNK lacks primase activity.</text>
</comment>
<dbReference type="EC" id="5.6.2.3" evidence="2"/>
<dbReference type="EMBL" id="AY059385">
    <property type="protein sequence ID" value="AAL27647.1"/>
    <property type="molecule type" value="mRNA"/>
</dbReference>
<dbReference type="EMBL" id="AK146244">
    <property type="protein sequence ID" value="BAE27008.1"/>
    <property type="molecule type" value="mRNA"/>
</dbReference>
<dbReference type="EMBL" id="BC034909">
    <property type="protein sequence ID" value="AAH34909.1"/>
    <property type="molecule type" value="mRNA"/>
</dbReference>
<dbReference type="EMBL" id="BC071195">
    <property type="protein sequence ID" value="AAH71195.1"/>
    <property type="molecule type" value="mRNA"/>
</dbReference>
<dbReference type="CCDS" id="CCDS29854.1">
    <molecule id="Q8CIW5-1"/>
</dbReference>
<dbReference type="RefSeq" id="NP_001335188.1">
    <molecule id="Q8CIW5-2"/>
    <property type="nucleotide sequence ID" value="NM_001348259.1"/>
</dbReference>
<dbReference type="RefSeq" id="NP_722491.2">
    <molecule id="Q8CIW5-1"/>
    <property type="nucleotide sequence ID" value="NM_153796.4"/>
</dbReference>
<dbReference type="SMR" id="Q8CIW5"/>
<dbReference type="BioGRID" id="230482">
    <property type="interactions" value="2"/>
</dbReference>
<dbReference type="FunCoup" id="Q8CIW5">
    <property type="interactions" value="1992"/>
</dbReference>
<dbReference type="STRING" id="10090.ENSMUSP00000026227"/>
<dbReference type="iPTMnet" id="Q8CIW5"/>
<dbReference type="PhosphoSitePlus" id="Q8CIW5"/>
<dbReference type="PaxDb" id="10090-ENSMUSP00000026227"/>
<dbReference type="PeptideAtlas" id="Q8CIW5"/>
<dbReference type="ProteomicsDB" id="301789">
    <molecule id="Q8CIW5-1"/>
</dbReference>
<dbReference type="ProteomicsDB" id="301790">
    <molecule id="Q8CIW5-2"/>
</dbReference>
<dbReference type="Pumba" id="Q8CIW5"/>
<dbReference type="Antibodypedia" id="1261">
    <property type="antibodies" value="217 antibodies from 25 providers"/>
</dbReference>
<dbReference type="Ensembl" id="ENSMUST00000026227.3">
    <molecule id="Q8CIW5-1"/>
    <property type="protein sequence ID" value="ENSMUSP00000026227.3"/>
    <property type="gene ID" value="ENSMUSG00000025209.6"/>
</dbReference>
<dbReference type="GeneID" id="226153"/>
<dbReference type="KEGG" id="mmu:226153"/>
<dbReference type="UCSC" id="uc008hqh.1">
    <molecule id="Q8CIW5-2"/>
    <property type="organism name" value="mouse"/>
</dbReference>
<dbReference type="UCSC" id="uc008hqi.1">
    <molecule id="Q8CIW5-1"/>
    <property type="organism name" value="mouse"/>
</dbReference>
<dbReference type="AGR" id="MGI:2137410"/>
<dbReference type="CTD" id="56652"/>
<dbReference type="MGI" id="MGI:2137410">
    <property type="gene designation" value="Twnk"/>
</dbReference>
<dbReference type="VEuPathDB" id="HostDB:ENSMUSG00000025209"/>
<dbReference type="eggNOG" id="KOG2373">
    <property type="taxonomic scope" value="Eukaryota"/>
</dbReference>
<dbReference type="GeneTree" id="ENSGT00390000004495"/>
<dbReference type="HOGENOM" id="CLU_012336_1_0_1"/>
<dbReference type="InParanoid" id="Q8CIW5"/>
<dbReference type="OMA" id="GIRWSRF"/>
<dbReference type="OrthoDB" id="275278at2759"/>
<dbReference type="PhylomeDB" id="Q8CIW5"/>
<dbReference type="TreeFam" id="TF105994"/>
<dbReference type="BRENDA" id="3.6.4.12">
    <property type="organism ID" value="3474"/>
</dbReference>
<dbReference type="Reactome" id="R-MMU-9837999">
    <property type="pathway name" value="Mitochondrial protein degradation"/>
</dbReference>
<dbReference type="Reactome" id="R-MMU-9913635">
    <property type="pathway name" value="Strand-asynchronous mitochondrial DNA replication"/>
</dbReference>
<dbReference type="BioGRID-ORCS" id="226153">
    <property type="hits" value="27 hits in 83 CRISPR screens"/>
</dbReference>
<dbReference type="ChiTaRS" id="Twnk">
    <property type="organism name" value="mouse"/>
</dbReference>
<dbReference type="PRO" id="PR:Q8CIW5"/>
<dbReference type="Proteomes" id="UP000000589">
    <property type="component" value="Chromosome 19"/>
</dbReference>
<dbReference type="RNAct" id="Q8CIW5">
    <property type="molecule type" value="protein"/>
</dbReference>
<dbReference type="Bgee" id="ENSMUSG00000025209">
    <property type="expression patterns" value="Expressed in epiblast (generic) and 183 other cell types or tissues"/>
</dbReference>
<dbReference type="ExpressionAtlas" id="Q8CIW5">
    <property type="expression patterns" value="baseline and differential"/>
</dbReference>
<dbReference type="GO" id="GO:0000262">
    <property type="term" value="C:mitochondrial chromosome"/>
    <property type="evidence" value="ECO:0007669"/>
    <property type="project" value="Ensembl"/>
</dbReference>
<dbReference type="GO" id="GO:0005743">
    <property type="term" value="C:mitochondrial inner membrane"/>
    <property type="evidence" value="ECO:0007669"/>
    <property type="project" value="UniProtKB-SubCell"/>
</dbReference>
<dbReference type="GO" id="GO:0042645">
    <property type="term" value="C:mitochondrial nucleoid"/>
    <property type="evidence" value="ECO:0000250"/>
    <property type="project" value="UniProtKB"/>
</dbReference>
<dbReference type="GO" id="GO:0005739">
    <property type="term" value="C:mitochondrion"/>
    <property type="evidence" value="ECO:0000314"/>
    <property type="project" value="MGI"/>
</dbReference>
<dbReference type="GO" id="GO:0043139">
    <property type="term" value="F:5'-3' DNA helicase activity"/>
    <property type="evidence" value="ECO:0000250"/>
    <property type="project" value="UniProtKB"/>
</dbReference>
<dbReference type="GO" id="GO:0005524">
    <property type="term" value="F:ATP binding"/>
    <property type="evidence" value="ECO:0007669"/>
    <property type="project" value="UniProtKB-KW"/>
</dbReference>
<dbReference type="GO" id="GO:0016887">
    <property type="term" value="F:ATP hydrolysis activity"/>
    <property type="evidence" value="ECO:0007669"/>
    <property type="project" value="Ensembl"/>
</dbReference>
<dbReference type="GO" id="GO:0003678">
    <property type="term" value="F:DNA helicase activity"/>
    <property type="evidence" value="ECO:0000314"/>
    <property type="project" value="MGI"/>
</dbReference>
<dbReference type="GO" id="GO:0042802">
    <property type="term" value="F:identical protein binding"/>
    <property type="evidence" value="ECO:0007669"/>
    <property type="project" value="Ensembl"/>
</dbReference>
<dbReference type="GO" id="GO:0008289">
    <property type="term" value="F:lipid binding"/>
    <property type="evidence" value="ECO:0007669"/>
    <property type="project" value="UniProtKB-KW"/>
</dbReference>
<dbReference type="GO" id="GO:0002020">
    <property type="term" value="F:protease binding"/>
    <property type="evidence" value="ECO:0007669"/>
    <property type="project" value="Ensembl"/>
</dbReference>
<dbReference type="GO" id="GO:0003697">
    <property type="term" value="F:single-stranded DNA binding"/>
    <property type="evidence" value="ECO:0000250"/>
    <property type="project" value="UniProtKB"/>
</dbReference>
<dbReference type="GO" id="GO:0006260">
    <property type="term" value="P:DNA replication"/>
    <property type="evidence" value="ECO:0000314"/>
    <property type="project" value="MGI"/>
</dbReference>
<dbReference type="GO" id="GO:0006264">
    <property type="term" value="P:mitochondrial DNA replication"/>
    <property type="evidence" value="ECO:0000315"/>
    <property type="project" value="UniProtKB"/>
</dbReference>
<dbReference type="GO" id="GO:0006390">
    <property type="term" value="P:mitochondrial transcription"/>
    <property type="evidence" value="ECO:0007669"/>
    <property type="project" value="Ensembl"/>
</dbReference>
<dbReference type="GO" id="GO:0034214">
    <property type="term" value="P:protein hexamerization"/>
    <property type="evidence" value="ECO:0007669"/>
    <property type="project" value="Ensembl"/>
</dbReference>
<dbReference type="CDD" id="cd01029">
    <property type="entry name" value="TOPRIM_primases"/>
    <property type="match status" value="1"/>
</dbReference>
<dbReference type="CDD" id="cd01122">
    <property type="entry name" value="Twinkle_C"/>
    <property type="match status" value="1"/>
</dbReference>
<dbReference type="FunFam" id="3.40.1360.10:FF:000008">
    <property type="entry name" value="Mitochondrial helicase twinkle"/>
    <property type="match status" value="1"/>
</dbReference>
<dbReference type="FunFam" id="3.40.50.300:FF:000845">
    <property type="entry name" value="Mitochondrial helicase twinkle"/>
    <property type="match status" value="1"/>
</dbReference>
<dbReference type="Gene3D" id="3.40.1360.10">
    <property type="match status" value="1"/>
</dbReference>
<dbReference type="Gene3D" id="3.40.50.300">
    <property type="entry name" value="P-loop containing nucleotide triphosphate hydrolases"/>
    <property type="match status" value="1"/>
</dbReference>
<dbReference type="InterPro" id="IPR007694">
    <property type="entry name" value="DNA_helicase_DnaB-like_C"/>
</dbReference>
<dbReference type="InterPro" id="IPR027417">
    <property type="entry name" value="P-loop_NTPase"/>
</dbReference>
<dbReference type="InterPro" id="IPR034154">
    <property type="entry name" value="TOPRIM_DnaG/twinkle"/>
</dbReference>
<dbReference type="InterPro" id="IPR027032">
    <property type="entry name" value="Twinkle-like"/>
</dbReference>
<dbReference type="PANTHER" id="PTHR12873">
    <property type="entry name" value="T7-LIKE MITOCHONDRIAL DNA HELICASE"/>
    <property type="match status" value="1"/>
</dbReference>
<dbReference type="PANTHER" id="PTHR12873:SF0">
    <property type="entry name" value="TWINKLE MTDNA HELICASE"/>
    <property type="match status" value="1"/>
</dbReference>
<dbReference type="Pfam" id="PF13481">
    <property type="entry name" value="AAA_25"/>
    <property type="match status" value="1"/>
</dbReference>
<dbReference type="SUPFAM" id="SSF52540">
    <property type="entry name" value="P-loop containing nucleoside triphosphate hydrolases"/>
    <property type="match status" value="1"/>
</dbReference>
<dbReference type="PROSITE" id="PS51199">
    <property type="entry name" value="SF4_HELICASE"/>
    <property type="match status" value="1"/>
</dbReference>
<sequence length="685" mass="76993">MWLLLRRAYPLRILLPLRGEWVGRRGLPRSLAPGPPRRRYRKEALPALEMPVSPVTTTEIRQYLRAHGIPFQDGHSCLRAPSPFVVSSDIKNEKKDAPTSFCLFIDKTTGHFLCMTSLAEGSWEDLQASVEGRGDGAKEGVLLREGPEAEVREEVLRIWNRAIPLWELPDPEEAQLARVMFGLTKVTDDTLRRFSVRYLRSARSLVFPWFTPGSSGLRGLKLLGAEGQENGVQYVETTIPRPGVYHNLFGLPLISRRDTEVVVTSRELDSLALSQSTGLPTLSLPRGTVCLPPALLPYLEQFRRIVFWLGDDLRSWEAAKLFARKLNPKRCSLVRPGNQQPRPLEALNQGLSLPRILRTALPAWHKSIVSFRQLREEVLGELSNVEQAAGVRWSRFPDLNRLLKGHRKGELTVFTGPTGSGKTTFISEYALDLCTQGVNTLWGSFEISNVRLARVMLTQFAVTRLEEQLDKYEEWADRFEDLPLYFMTFHGQQSIRSVIDTMQHAVYVYDVCHVVIDNLQFMMGHEQLSSDRIAAQDYIVGAFRKFATDNSCHVTLVIHPRKEDDDKELQTASIFGSAKASQEADNVLILQDRKLVTGPGKRYLQVSKNRFDGDVGVFPLEFNKNSLTFSIPPKSKARLKKIKDDNGLVAKKSSSGKKGAAHQNPEICLGQDPSPAQPDTSKSSG</sequence>